<feature type="chain" id="PRO_0000186072" description="Histone-lysine N-methyltransferase, H3 lysine-9 specific SUVH1">
    <location>
        <begin position="1"/>
        <end position="670"/>
    </location>
</feature>
<feature type="domain" description="YDG" evidence="5">
    <location>
        <begin position="211"/>
        <end position="357"/>
    </location>
</feature>
<feature type="domain" description="Pre-SET" evidence="3">
    <location>
        <begin position="432"/>
        <end position="492"/>
    </location>
</feature>
<feature type="domain" description="SET" evidence="4">
    <location>
        <begin position="495"/>
        <end position="639"/>
    </location>
</feature>
<feature type="domain" description="Post-SET" evidence="2">
    <location>
        <begin position="654"/>
        <end position="670"/>
    </location>
</feature>
<feature type="region of interest" description="Disordered" evidence="7">
    <location>
        <begin position="53"/>
        <end position="140"/>
    </location>
</feature>
<feature type="compositionally biased region" description="Low complexity" evidence="7">
    <location>
        <begin position="68"/>
        <end position="79"/>
    </location>
</feature>
<feature type="compositionally biased region" description="Basic residues" evidence="7">
    <location>
        <begin position="123"/>
        <end position="133"/>
    </location>
</feature>
<feature type="binding site" evidence="1">
    <location>
        <position position="434"/>
    </location>
    <ligand>
        <name>Zn(2+)</name>
        <dbReference type="ChEBI" id="CHEBI:29105"/>
        <label>1</label>
    </ligand>
</feature>
<feature type="binding site" evidence="1">
    <location>
        <position position="434"/>
    </location>
    <ligand>
        <name>Zn(2+)</name>
        <dbReference type="ChEBI" id="CHEBI:29105"/>
        <label>2</label>
    </ligand>
</feature>
<feature type="binding site" evidence="1">
    <location>
        <position position="436"/>
    </location>
    <ligand>
        <name>Zn(2+)</name>
        <dbReference type="ChEBI" id="CHEBI:29105"/>
        <label>1</label>
    </ligand>
</feature>
<feature type="binding site" evidence="1">
    <location>
        <position position="440"/>
    </location>
    <ligand>
        <name>Zn(2+)</name>
        <dbReference type="ChEBI" id="CHEBI:29105"/>
        <label>1</label>
    </ligand>
</feature>
<feature type="binding site" evidence="1">
    <location>
        <position position="440"/>
    </location>
    <ligand>
        <name>Zn(2+)</name>
        <dbReference type="ChEBI" id="CHEBI:29105"/>
        <label>3</label>
    </ligand>
</feature>
<feature type="binding site" evidence="1">
    <location>
        <position position="447"/>
    </location>
    <ligand>
        <name>Zn(2+)</name>
        <dbReference type="ChEBI" id="CHEBI:29105"/>
        <label>1</label>
    </ligand>
</feature>
<feature type="binding site" evidence="1">
    <location>
        <position position="449"/>
    </location>
    <ligand>
        <name>Zn(2+)</name>
        <dbReference type="ChEBI" id="CHEBI:29105"/>
        <label>2</label>
    </ligand>
</feature>
<feature type="binding site" evidence="1">
    <location>
        <position position="475"/>
    </location>
    <ligand>
        <name>Zn(2+)</name>
        <dbReference type="ChEBI" id="CHEBI:29105"/>
        <label>2</label>
    </ligand>
</feature>
<feature type="binding site" evidence="1">
    <location>
        <position position="475"/>
    </location>
    <ligand>
        <name>Zn(2+)</name>
        <dbReference type="ChEBI" id="CHEBI:29105"/>
        <label>3</label>
    </ligand>
</feature>
<feature type="binding site" evidence="1">
    <location>
        <position position="479"/>
    </location>
    <ligand>
        <name>Zn(2+)</name>
        <dbReference type="ChEBI" id="CHEBI:29105"/>
        <label>2</label>
    </ligand>
</feature>
<feature type="binding site" evidence="1">
    <location>
        <position position="481"/>
    </location>
    <ligand>
        <name>Zn(2+)</name>
        <dbReference type="ChEBI" id="CHEBI:29105"/>
        <label>3</label>
    </ligand>
</feature>
<feature type="binding site" evidence="1">
    <location>
        <position position="484"/>
    </location>
    <ligand>
        <name>Zn(2+)</name>
        <dbReference type="ChEBI" id="CHEBI:29105"/>
        <label>3</label>
    </ligand>
</feature>
<feature type="binding site" evidence="1">
    <location>
        <begin position="505"/>
        <end position="507"/>
    </location>
    <ligand>
        <name>S-adenosyl-L-methionine</name>
        <dbReference type="ChEBI" id="CHEBI:59789"/>
    </ligand>
</feature>
<feature type="binding site" evidence="4">
    <location>
        <position position="541"/>
    </location>
    <ligand>
        <name>S-adenosyl-L-methionine</name>
        <dbReference type="ChEBI" id="CHEBI:59789"/>
    </ligand>
</feature>
<feature type="binding site" evidence="4">
    <location>
        <position position="543"/>
    </location>
    <ligand>
        <name>S-adenosyl-L-methionine</name>
        <dbReference type="ChEBI" id="CHEBI:59789"/>
    </ligand>
</feature>
<feature type="binding site" evidence="4">
    <location>
        <position position="593"/>
    </location>
    <ligand>
        <name>S-adenosyl-L-methionine</name>
        <dbReference type="ChEBI" id="CHEBI:59789"/>
    </ligand>
</feature>
<feature type="binding site" evidence="1">
    <location>
        <begin position="596"/>
        <end position="597"/>
    </location>
    <ligand>
        <name>S-adenosyl-L-methionine</name>
        <dbReference type="ChEBI" id="CHEBI:59789"/>
    </ligand>
</feature>
<feature type="binding site" evidence="1">
    <location>
        <position position="599"/>
    </location>
    <ligand>
        <name>Zn(2+)</name>
        <dbReference type="ChEBI" id="CHEBI:29105"/>
        <label>4</label>
    </ligand>
</feature>
<feature type="binding site" evidence="1">
    <location>
        <position position="658"/>
    </location>
    <ligand>
        <name>Zn(2+)</name>
        <dbReference type="ChEBI" id="CHEBI:29105"/>
        <label>4</label>
    </ligand>
</feature>
<feature type="binding site" evidence="1">
    <location>
        <position position="660"/>
    </location>
    <ligand>
        <name>Zn(2+)</name>
        <dbReference type="ChEBI" id="CHEBI:29105"/>
        <label>4</label>
    </ligand>
</feature>
<feature type="binding site" evidence="1">
    <location>
        <position position="665"/>
    </location>
    <ligand>
        <name>Zn(2+)</name>
        <dbReference type="ChEBI" id="CHEBI:29105"/>
        <label>4</label>
    </ligand>
</feature>
<reference key="1">
    <citation type="journal article" date="2001" name="Nucleic Acids Res.">
        <title>The Arabidopsis thaliana genome contains at least 29 active genes encoding SET domain proteins that can be assigned to four evolutionarily conserved classes.</title>
        <authorList>
            <person name="Baumbusch L.O."/>
            <person name="Thorstensen T."/>
            <person name="Krauss V."/>
            <person name="Fischer A."/>
            <person name="Naumann K."/>
            <person name="Assalkhou R."/>
            <person name="Schulz I."/>
            <person name="Reuter G."/>
            <person name="Aalen R.B."/>
        </authorList>
    </citation>
    <scope>NUCLEOTIDE SEQUENCE [MRNA]</scope>
    <scope>SUBCELLULAR LOCATION</scope>
    <scope>NOMENCLATURE</scope>
    <scope>TISSUE SPECIFICITY</scope>
</reference>
<reference key="2">
    <citation type="journal article" date="1997" name="DNA Res.">
        <title>Structural analysis of Arabidopsis thaliana chromosome 5. I. Sequence features of the 1.6 Mb regions covered by twenty physically assigned P1 clones.</title>
        <authorList>
            <person name="Sato S."/>
            <person name="Kotani H."/>
            <person name="Nakamura Y."/>
            <person name="Kaneko T."/>
            <person name="Asamizu E."/>
            <person name="Fukami M."/>
            <person name="Miyajima N."/>
            <person name="Tabata S."/>
        </authorList>
    </citation>
    <scope>NUCLEOTIDE SEQUENCE [LARGE SCALE GENOMIC DNA]</scope>
    <source>
        <strain>cv. Columbia</strain>
    </source>
</reference>
<reference key="3">
    <citation type="journal article" date="2017" name="Plant J.">
        <title>Araport11: a complete reannotation of the Arabidopsis thaliana reference genome.</title>
        <authorList>
            <person name="Cheng C.Y."/>
            <person name="Krishnakumar V."/>
            <person name="Chan A.P."/>
            <person name="Thibaud-Nissen F."/>
            <person name="Schobel S."/>
            <person name="Town C.D."/>
        </authorList>
    </citation>
    <scope>GENOME REANNOTATION</scope>
    <source>
        <strain>cv. Columbia</strain>
    </source>
</reference>
<reference key="4">
    <citation type="journal article" date="2005" name="EMBO J.">
        <title>Pivotal role of AtSUVH2 in heterochromatic histone methylation and gene silencing in Arabidopsis.</title>
        <authorList>
            <person name="Naumann K."/>
            <person name="Fischer A."/>
            <person name="Hofmann I."/>
            <person name="Krauss V."/>
            <person name="Phalke S."/>
            <person name="Irmler K."/>
            <person name="Hause G."/>
            <person name="Aurich A.-C."/>
            <person name="Dorn R."/>
            <person name="Jenuwein T."/>
            <person name="Reuter G."/>
        </authorList>
    </citation>
    <scope>FUNCTION</scope>
    <scope>SUBCELLULAR LOCATION</scope>
</reference>
<reference key="5">
    <citation type="journal article" date="2006" name="J. Plant Physiol.">
        <title>Heterochromatin proteins and the control of heterochromatic gene silencing in Arabidopsis.</title>
        <authorList>
            <person name="Fischer A."/>
            <person name="Hofmann I."/>
            <person name="Naumann K."/>
            <person name="Reuter G."/>
        </authorList>
    </citation>
    <scope>GENE FAMILY</scope>
</reference>
<gene>
    <name type="primary">SUVH1</name>
    <name type="synonym">SDG32</name>
    <name type="synonym">SET32</name>
    <name type="ordered locus">At5g04940</name>
    <name type="ORF">MUG13.20</name>
</gene>
<proteinExistence type="evidence at transcript level"/>
<name>SUVH1_ARATH</name>
<dbReference type="EC" id="2.1.1.368" evidence="10"/>
<dbReference type="EMBL" id="AF344444">
    <property type="protein sequence ID" value="AAK28966.1"/>
    <property type="molecule type" value="mRNA"/>
</dbReference>
<dbReference type="EMBL" id="AB005245">
    <property type="protein sequence ID" value="BAB11516.1"/>
    <property type="molecule type" value="Genomic_DNA"/>
</dbReference>
<dbReference type="EMBL" id="CP002688">
    <property type="protein sequence ID" value="AED90806.1"/>
    <property type="molecule type" value="Genomic_DNA"/>
</dbReference>
<dbReference type="EMBL" id="CP002688">
    <property type="protein sequence ID" value="AED90807.1"/>
    <property type="molecule type" value="Genomic_DNA"/>
</dbReference>
<dbReference type="RefSeq" id="NP_196113.1">
    <property type="nucleotide sequence ID" value="NM_120576.1"/>
</dbReference>
<dbReference type="RefSeq" id="NP_850767.1">
    <property type="nucleotide sequence ID" value="NM_180436.2"/>
</dbReference>
<dbReference type="SMR" id="Q9FF80"/>
<dbReference type="BioGRID" id="15655">
    <property type="interactions" value="3"/>
</dbReference>
<dbReference type="FunCoup" id="Q9FF80">
    <property type="interactions" value="717"/>
</dbReference>
<dbReference type="STRING" id="3702.Q9FF80"/>
<dbReference type="PaxDb" id="3702-AT5G04940.1"/>
<dbReference type="ProteomicsDB" id="226518"/>
<dbReference type="EnsemblPlants" id="AT5G04940.1">
    <property type="protein sequence ID" value="AT5G04940.1"/>
    <property type="gene ID" value="AT5G04940"/>
</dbReference>
<dbReference type="EnsemblPlants" id="AT5G04940.2">
    <property type="protein sequence ID" value="AT5G04940.2"/>
    <property type="gene ID" value="AT5G04940"/>
</dbReference>
<dbReference type="GeneID" id="830376"/>
<dbReference type="Gramene" id="AT5G04940.1">
    <property type="protein sequence ID" value="AT5G04940.1"/>
    <property type="gene ID" value="AT5G04940"/>
</dbReference>
<dbReference type="Gramene" id="AT5G04940.2">
    <property type="protein sequence ID" value="AT5G04940.2"/>
    <property type="gene ID" value="AT5G04940"/>
</dbReference>
<dbReference type="KEGG" id="ath:AT5G04940"/>
<dbReference type="Araport" id="AT5G04940"/>
<dbReference type="TAIR" id="AT5G04940">
    <property type="gene designation" value="SUVH1"/>
</dbReference>
<dbReference type="eggNOG" id="KOG1082">
    <property type="taxonomic scope" value="Eukaryota"/>
</dbReference>
<dbReference type="HOGENOM" id="CLU_004556_2_1_1"/>
<dbReference type="InParanoid" id="Q9FF80"/>
<dbReference type="OMA" id="QPHTHNN"/>
<dbReference type="PhylomeDB" id="Q9FF80"/>
<dbReference type="BRENDA" id="2.1.1.368">
    <property type="organism ID" value="399"/>
</dbReference>
<dbReference type="PRO" id="PR:Q9FF80"/>
<dbReference type="Proteomes" id="UP000006548">
    <property type="component" value="Chromosome 5"/>
</dbReference>
<dbReference type="ExpressionAtlas" id="Q9FF80">
    <property type="expression patterns" value="baseline and differential"/>
</dbReference>
<dbReference type="GO" id="GO:0000775">
    <property type="term" value="C:chromosome, centromeric region"/>
    <property type="evidence" value="ECO:0007669"/>
    <property type="project" value="UniProtKB-SubCell"/>
</dbReference>
<dbReference type="GO" id="GO:0005634">
    <property type="term" value="C:nucleus"/>
    <property type="evidence" value="ECO:0000314"/>
    <property type="project" value="TAIR"/>
</dbReference>
<dbReference type="GO" id="GO:0031490">
    <property type="term" value="F:chromatin DNA binding"/>
    <property type="evidence" value="ECO:0000314"/>
    <property type="project" value="TAIR"/>
</dbReference>
<dbReference type="GO" id="GO:0001228">
    <property type="term" value="F:DNA-binding transcription activator activity, RNA polymerase II-specific"/>
    <property type="evidence" value="ECO:0000314"/>
    <property type="project" value="TAIR"/>
</dbReference>
<dbReference type="GO" id="GO:0010385">
    <property type="term" value="F:double-stranded methylated DNA binding"/>
    <property type="evidence" value="ECO:0000314"/>
    <property type="project" value="TAIR"/>
</dbReference>
<dbReference type="GO" id="GO:0008168">
    <property type="term" value="F:methyltransferase activity"/>
    <property type="evidence" value="ECO:0007669"/>
    <property type="project" value="UniProtKB-KW"/>
</dbReference>
<dbReference type="GO" id="GO:0008270">
    <property type="term" value="F:zinc ion binding"/>
    <property type="evidence" value="ECO:0007669"/>
    <property type="project" value="InterPro"/>
</dbReference>
<dbReference type="GO" id="GO:0040029">
    <property type="term" value="P:epigenetic regulation of gene expression"/>
    <property type="evidence" value="ECO:0000304"/>
    <property type="project" value="TAIR"/>
</dbReference>
<dbReference type="GO" id="GO:0032259">
    <property type="term" value="P:methylation"/>
    <property type="evidence" value="ECO:0007669"/>
    <property type="project" value="UniProtKB-KW"/>
</dbReference>
<dbReference type="CDD" id="cd10545">
    <property type="entry name" value="SET_AtSUVH-like"/>
    <property type="match status" value="1"/>
</dbReference>
<dbReference type="FunFam" id="2.30.280.10:FF:000003">
    <property type="entry name" value="Histone-lysine N-methyltransferase, H3 lysine-9 specific SUVH5"/>
    <property type="match status" value="1"/>
</dbReference>
<dbReference type="FunFam" id="2.170.270.10:FF:000051">
    <property type="entry name" value="Histone-lysine N-methyltransferase, H3 lysine-9 specific SUVH6"/>
    <property type="match status" value="1"/>
</dbReference>
<dbReference type="Gene3D" id="2.170.270.10">
    <property type="entry name" value="SET domain"/>
    <property type="match status" value="1"/>
</dbReference>
<dbReference type="Gene3D" id="2.30.280.10">
    <property type="entry name" value="SRA-YDG"/>
    <property type="match status" value="1"/>
</dbReference>
<dbReference type="InterPro" id="IPR025794">
    <property type="entry name" value="H3-K9-MeTrfase_plant"/>
</dbReference>
<dbReference type="InterPro" id="IPR051357">
    <property type="entry name" value="H3K9_HMTase_SUVAR3-9"/>
</dbReference>
<dbReference type="InterPro" id="IPR003616">
    <property type="entry name" value="Post-SET_dom"/>
</dbReference>
<dbReference type="InterPro" id="IPR007728">
    <property type="entry name" value="Pre-SET_dom"/>
</dbReference>
<dbReference type="InterPro" id="IPR015947">
    <property type="entry name" value="PUA-like_sf"/>
</dbReference>
<dbReference type="InterPro" id="IPR001214">
    <property type="entry name" value="SET_dom"/>
</dbReference>
<dbReference type="InterPro" id="IPR046341">
    <property type="entry name" value="SET_dom_sf"/>
</dbReference>
<dbReference type="InterPro" id="IPR036987">
    <property type="entry name" value="SRA-YDG_sf"/>
</dbReference>
<dbReference type="InterPro" id="IPR003105">
    <property type="entry name" value="SRA_YDG"/>
</dbReference>
<dbReference type="PANTHER" id="PTHR45660">
    <property type="entry name" value="HISTONE-LYSINE N-METHYLTRANSFERASE SETMAR"/>
    <property type="match status" value="1"/>
</dbReference>
<dbReference type="PANTHER" id="PTHR45660:SF73">
    <property type="entry name" value="HISTONE-LYSINE N-METHYLTRANSFERASE, H3 LYSINE-9 SPECIFIC SUVH1"/>
    <property type="match status" value="1"/>
</dbReference>
<dbReference type="Pfam" id="PF05033">
    <property type="entry name" value="Pre-SET"/>
    <property type="match status" value="1"/>
</dbReference>
<dbReference type="Pfam" id="PF02182">
    <property type="entry name" value="SAD_SRA"/>
    <property type="match status" value="1"/>
</dbReference>
<dbReference type="Pfam" id="PF00856">
    <property type="entry name" value="SET"/>
    <property type="match status" value="1"/>
</dbReference>
<dbReference type="SMART" id="SM00468">
    <property type="entry name" value="PreSET"/>
    <property type="match status" value="1"/>
</dbReference>
<dbReference type="SMART" id="SM00317">
    <property type="entry name" value="SET"/>
    <property type="match status" value="1"/>
</dbReference>
<dbReference type="SMART" id="SM00466">
    <property type="entry name" value="SRA"/>
    <property type="match status" value="1"/>
</dbReference>
<dbReference type="SUPFAM" id="SSF88697">
    <property type="entry name" value="PUA domain-like"/>
    <property type="match status" value="1"/>
</dbReference>
<dbReference type="SUPFAM" id="SSF82199">
    <property type="entry name" value="SET domain"/>
    <property type="match status" value="1"/>
</dbReference>
<dbReference type="PROSITE" id="PS50868">
    <property type="entry name" value="POST_SET"/>
    <property type="match status" value="1"/>
</dbReference>
<dbReference type="PROSITE" id="PS50867">
    <property type="entry name" value="PRE_SET"/>
    <property type="match status" value="1"/>
</dbReference>
<dbReference type="PROSITE" id="PS51575">
    <property type="entry name" value="SAM_MT43_SUVAR39_2"/>
    <property type="match status" value="1"/>
</dbReference>
<dbReference type="PROSITE" id="PS50280">
    <property type="entry name" value="SET"/>
    <property type="match status" value="1"/>
</dbReference>
<dbReference type="PROSITE" id="PS51015">
    <property type="entry name" value="YDG"/>
    <property type="match status" value="1"/>
</dbReference>
<organism>
    <name type="scientific">Arabidopsis thaliana</name>
    <name type="common">Mouse-ear cress</name>
    <dbReference type="NCBI Taxonomy" id="3702"/>
    <lineage>
        <taxon>Eukaryota</taxon>
        <taxon>Viridiplantae</taxon>
        <taxon>Streptophyta</taxon>
        <taxon>Embryophyta</taxon>
        <taxon>Tracheophyta</taxon>
        <taxon>Spermatophyta</taxon>
        <taxon>Magnoliopsida</taxon>
        <taxon>eudicotyledons</taxon>
        <taxon>Gunneridae</taxon>
        <taxon>Pentapetalae</taxon>
        <taxon>rosids</taxon>
        <taxon>malvids</taxon>
        <taxon>Brassicales</taxon>
        <taxon>Brassicaceae</taxon>
        <taxon>Camelineae</taxon>
        <taxon>Arabidopsis</taxon>
    </lineage>
</organism>
<evidence type="ECO:0000250" key="1"/>
<evidence type="ECO:0000255" key="2">
    <source>
        <dbReference type="PROSITE-ProRule" id="PRU00155"/>
    </source>
</evidence>
<evidence type="ECO:0000255" key="3">
    <source>
        <dbReference type="PROSITE-ProRule" id="PRU00157"/>
    </source>
</evidence>
<evidence type="ECO:0000255" key="4">
    <source>
        <dbReference type="PROSITE-ProRule" id="PRU00190"/>
    </source>
</evidence>
<evidence type="ECO:0000255" key="5">
    <source>
        <dbReference type="PROSITE-ProRule" id="PRU00358"/>
    </source>
</evidence>
<evidence type="ECO:0000255" key="6">
    <source>
        <dbReference type="PROSITE-ProRule" id="PRU00908"/>
    </source>
</evidence>
<evidence type="ECO:0000256" key="7">
    <source>
        <dbReference type="SAM" id="MobiDB-lite"/>
    </source>
</evidence>
<evidence type="ECO:0000269" key="8">
    <source>
    </source>
</evidence>
<evidence type="ECO:0000269" key="9">
    <source>
    </source>
</evidence>
<evidence type="ECO:0000305" key="10">
    <source>
    </source>
</evidence>
<keyword id="KW-0137">Centromere</keyword>
<keyword id="KW-0156">Chromatin regulator</keyword>
<keyword id="KW-0158">Chromosome</keyword>
<keyword id="KW-0479">Metal-binding</keyword>
<keyword id="KW-0489">Methyltransferase</keyword>
<keyword id="KW-0539">Nucleus</keyword>
<keyword id="KW-1185">Reference proteome</keyword>
<keyword id="KW-0949">S-adenosyl-L-methionine</keyword>
<keyword id="KW-0808">Transferase</keyword>
<keyword id="KW-0862">Zinc</keyword>
<sequence length="670" mass="74471">MERNGGHYTDKTRVLDIKPLRTLRPVFPSGNQAPPFVCAPPFGPFPPGFSSFYPFSSSQANQHTPDLNQAQYPPQHQQPQNPPPVYQQQPPQHASEPSLVTPLRSFRSPDVSNGNAELEGSTVKRRIPKKRPISRPENMNFESGINVADRENGNRELVLSVLMRFDALRRRFAQLEDAKEAVSGIIKRPDLKSGSTCMGRGVRTNTKKRPGIVPGVEIGDVFFFRFEMCLVGLHSPSMAGIDYLVVKGETEEEPIATSIVSSGYYDNDEGNPDVLIYTGQGGNADKDKQSSDQKLERGNLALEKSLRRDSAVRVIRGLKEASHNAKIYIYDGLYEIKESWVEKGKSGHNTFKYKLVRAPGQPPAFASWTAIQKWKTGVPSRQGLILPDMTSGVESIPVSLVNEVDTDNGPAYFTYSTTVKYSESFKLMQPSFGCDCANLCKPGNLDCHCIRKNGGDFPYTGNGILVSRKPMIYECSPSCPCSTCKNKVTQMGVKVRLEVFKTANRGWGLRSWDAIRAGSFICIYVGEAKDKSKVQQTMANDDYTFDTTNVYNPFKWNYEPGLADEDACEEMSEESEIPLPLIISAKNVGNVARFMNHSCSPNVFWQPVSYENNSQLFVHVAFFAISHIPPMTELTYDYGVSRPSGTQNGNPLYGKRKCFCGSAYCRGSFG</sequence>
<accession>Q9FF80</accession>
<comment type="function">
    <text evidence="9">Histone methyltransferase. Methylates 'Lys-9' of histone H3. H3 'Lys-9' methylation represents a specific tag for epigenetic transcriptional repression.</text>
</comment>
<comment type="catalytic activity">
    <reaction evidence="6 10">
        <text>L-lysyl(9)-[histone H3] + 2 S-adenosyl-L-methionine = N(6),N(6)-dimethyl-L-lysyl(9)-[histone H3] + 2 S-adenosyl-L-homocysteine + 2 H(+)</text>
        <dbReference type="Rhea" id="RHEA:64444"/>
        <dbReference type="Rhea" id="RHEA-COMP:15541"/>
        <dbReference type="Rhea" id="RHEA-COMP:15546"/>
        <dbReference type="ChEBI" id="CHEBI:15378"/>
        <dbReference type="ChEBI" id="CHEBI:29969"/>
        <dbReference type="ChEBI" id="CHEBI:57856"/>
        <dbReference type="ChEBI" id="CHEBI:59789"/>
        <dbReference type="ChEBI" id="CHEBI:61976"/>
        <dbReference type="EC" id="2.1.1.368"/>
    </reaction>
</comment>
<comment type="subcellular location">
    <subcellularLocation>
        <location>Nucleus</location>
    </subcellularLocation>
    <subcellularLocation>
        <location>Chromosome</location>
        <location>Centromere</location>
    </subcellularLocation>
    <text>Associates with centromeric constitutive heterochromatin.</text>
</comment>
<comment type="tissue specificity">
    <text evidence="8">Expressed in leaves stems and flowers.</text>
</comment>
<comment type="domain">
    <text>Although the SET domain contains the active site of enzymatic activity, both pre-SET and post-SET domains are required for methyltransferase activity.</text>
</comment>
<comment type="domain">
    <text evidence="1">In the pre-SET domain, Cys residues bind 3 zinc ions that are arranged in a triangular cluster; some of these Cys residues contribute to the binding of two zinc ions within the cluster.</text>
</comment>
<comment type="similarity">
    <text evidence="6">Belongs to the class V-like SAM-binding methyltransferase superfamily. Histone-lysine methyltransferase family. Suvar3-9 subfamily.</text>
</comment>
<protein>
    <recommendedName>
        <fullName>Histone-lysine N-methyltransferase, H3 lysine-9 specific SUVH1</fullName>
        <ecNumber evidence="10">2.1.1.368</ecNumber>
    </recommendedName>
    <alternativeName>
        <fullName>Histone H3-K9 methyltransferase 1</fullName>
        <shortName>H3-K9-HMTase 1</shortName>
    </alternativeName>
    <alternativeName>
        <fullName>Protein SET DOMAIN GROUP 32</fullName>
    </alternativeName>
    <alternativeName>
        <fullName>Suppressor of variegation 3-9 homolog protein 1</fullName>
        <shortName>Su(var)3-9 homolog protein 1</shortName>
    </alternativeName>
</protein>